<accession>A0A6B9KZ02</accession>
<keyword id="KW-0964">Secreted</keyword>
<keyword id="KW-0732">Signal</keyword>
<feature type="signal peptide" evidence="1">
    <location>
        <begin position="1"/>
        <end position="18"/>
    </location>
</feature>
<feature type="chain" id="PRO_5025380854" description="Venom protein family 16 protein 1" evidence="4">
    <location>
        <begin position="19"/>
        <end position="127"/>
    </location>
</feature>
<sequence length="127" mass="14158">MWIWYSLLFFGVCHLAHSTSTVDDALTCHGEKLAEEVLNELKEHFGPHWEEKVPELIEKLNAIGENLQLEKNEDKPSIGGNPWENTDMMLRFKWKKVLHKVGHVAGKIAIGAASNIAAKAVMGALGK</sequence>
<organism>
    <name type="scientific">Platymeris rhadamanthus</name>
    <name type="common">Red spot assassin bug</name>
    <dbReference type="NCBI Taxonomy" id="1134088"/>
    <lineage>
        <taxon>Eukaryota</taxon>
        <taxon>Metazoa</taxon>
        <taxon>Ecdysozoa</taxon>
        <taxon>Arthropoda</taxon>
        <taxon>Hexapoda</taxon>
        <taxon>Insecta</taxon>
        <taxon>Pterygota</taxon>
        <taxon>Neoptera</taxon>
        <taxon>Paraneoptera</taxon>
        <taxon>Hemiptera</taxon>
        <taxon>Heteroptera</taxon>
        <taxon>Panheteroptera</taxon>
        <taxon>Cimicomorpha</taxon>
        <taxon>Reduviidae</taxon>
        <taxon>Platymeris</taxon>
    </lineage>
</organism>
<evidence type="ECO:0000255" key="1"/>
<evidence type="ECO:0000269" key="2">
    <source>
    </source>
</evidence>
<evidence type="ECO:0000303" key="3">
    <source>
    </source>
</evidence>
<evidence type="ECO:0000305" key="4"/>
<name>F16P1_PLARH</name>
<protein>
    <recommendedName>
        <fullName evidence="3">Venom protein family 16 protein 1</fullName>
        <shortName evidence="3">f16p1</shortName>
    </recommendedName>
</protein>
<comment type="subcellular location">
    <subcellularLocation>
        <location evidence="2">Secreted</location>
    </subcellularLocation>
</comment>
<comment type="tissue specificity">
    <text evidence="2">Expressed by the venom gland (anterior main gland) (at protein level).</text>
</comment>
<proteinExistence type="evidence at protein level"/>
<dbReference type="EMBL" id="MN208282">
    <property type="protein sequence ID" value="QHB21471.1"/>
    <property type="molecule type" value="mRNA"/>
</dbReference>
<dbReference type="SMR" id="A0A6B9KZ02"/>
<dbReference type="GO" id="GO:0005576">
    <property type="term" value="C:extracellular region"/>
    <property type="evidence" value="ECO:0007669"/>
    <property type="project" value="UniProtKB-SubCell"/>
</dbReference>
<reference key="1">
    <citation type="journal article" date="2019" name="Toxins">
        <title>Missiles of mass disruption: composition and glandular origin of venom used as a projectile defensive weapon by the assassin bug Platymeris rhadamanthus.</title>
        <authorList>
            <person name="Walker A.A."/>
            <person name="Robinson S.D."/>
            <person name="Undheim E.A.B."/>
            <person name="Jin J."/>
            <person name="Han X."/>
            <person name="Fry B.G."/>
            <person name="Vetter I."/>
            <person name="King G.F."/>
        </authorList>
    </citation>
    <scope>NUCLEOTIDE SEQUENCE [MRNA]</scope>
    <scope>IDENTIFICATION BY MASS SPECTROMETRY</scope>
    <scope>SUBCELLULAR LOCATION</scope>
    <scope>TISSUE SPECIFICITY</scope>
    <source>
        <tissue>Venom</tissue>
        <tissue>Venom gland</tissue>
    </source>
</reference>